<proteinExistence type="inferred from homology"/>
<name>RL28_KARMG</name>
<sequence>MSKLCQITGKKPMMGNKVSHANNKTKRIFNLNLSKKRFFIKKKWILLKVSSAGIKTINKFGIEKTLKKLNFNVKKKY</sequence>
<evidence type="ECO:0000255" key="1">
    <source>
        <dbReference type="HAMAP-Rule" id="MF_00373"/>
    </source>
</evidence>
<evidence type="ECO:0000305" key="2"/>
<protein>
    <recommendedName>
        <fullName evidence="1">Large ribosomal subunit protein bL28</fullName>
    </recommendedName>
    <alternativeName>
        <fullName evidence="2">50S ribosomal protein L28</fullName>
    </alternativeName>
</protein>
<reference key="1">
    <citation type="journal article" date="2007" name="Proc. Natl. Acad. Sci. U.S.A.">
        <title>Parallel genomic evolution and metabolic interdependence in an ancient symbiosis.</title>
        <authorList>
            <person name="McCutcheon J.P."/>
            <person name="Moran N.A."/>
        </authorList>
    </citation>
    <scope>NUCLEOTIDE SEQUENCE [LARGE SCALE GENOMIC DNA]</scope>
    <source>
        <strain>GWSS</strain>
    </source>
</reference>
<accession>A8Z5S7</accession>
<gene>
    <name evidence="1" type="primary">rpmB</name>
    <name type="ordered locus">SMGWSS_050</name>
</gene>
<feature type="chain" id="PRO_1000079869" description="Large ribosomal subunit protein bL28">
    <location>
        <begin position="1"/>
        <end position="77"/>
    </location>
</feature>
<organism>
    <name type="scientific">Karelsulcia muelleri (strain GWSS)</name>
    <name type="common">Sulcia muelleri</name>
    <dbReference type="NCBI Taxonomy" id="444179"/>
    <lineage>
        <taxon>Bacteria</taxon>
        <taxon>Pseudomonadati</taxon>
        <taxon>Bacteroidota</taxon>
        <taxon>Flavobacteriia</taxon>
        <taxon>Flavobacteriales</taxon>
        <taxon>Candidatus Karelsulcia</taxon>
    </lineage>
</organism>
<dbReference type="EMBL" id="CP000770">
    <property type="protein sequence ID" value="ABS30478.1"/>
    <property type="molecule type" value="Genomic_DNA"/>
</dbReference>
<dbReference type="SMR" id="A8Z5S7"/>
<dbReference type="STRING" id="444179.SMGWSS_050"/>
<dbReference type="KEGG" id="smg:SMGWSS_050"/>
<dbReference type="HOGENOM" id="CLU_064548_3_1_10"/>
<dbReference type="Proteomes" id="UP000000781">
    <property type="component" value="Chromosome"/>
</dbReference>
<dbReference type="GO" id="GO:1990904">
    <property type="term" value="C:ribonucleoprotein complex"/>
    <property type="evidence" value="ECO:0007669"/>
    <property type="project" value="UniProtKB-KW"/>
</dbReference>
<dbReference type="GO" id="GO:0005840">
    <property type="term" value="C:ribosome"/>
    <property type="evidence" value="ECO:0007669"/>
    <property type="project" value="UniProtKB-KW"/>
</dbReference>
<dbReference type="GO" id="GO:0003735">
    <property type="term" value="F:structural constituent of ribosome"/>
    <property type="evidence" value="ECO:0007669"/>
    <property type="project" value="InterPro"/>
</dbReference>
<dbReference type="GO" id="GO:0006412">
    <property type="term" value="P:translation"/>
    <property type="evidence" value="ECO:0007669"/>
    <property type="project" value="UniProtKB-UniRule"/>
</dbReference>
<dbReference type="Gene3D" id="2.30.170.40">
    <property type="entry name" value="Ribosomal protein L28/L24"/>
    <property type="match status" value="1"/>
</dbReference>
<dbReference type="HAMAP" id="MF_00373">
    <property type="entry name" value="Ribosomal_bL28"/>
    <property type="match status" value="1"/>
</dbReference>
<dbReference type="InterPro" id="IPR050096">
    <property type="entry name" value="Bacterial_rp_bL28"/>
</dbReference>
<dbReference type="InterPro" id="IPR026569">
    <property type="entry name" value="Ribosomal_bL28"/>
</dbReference>
<dbReference type="InterPro" id="IPR034704">
    <property type="entry name" value="Ribosomal_bL28/bL31-like_sf"/>
</dbReference>
<dbReference type="InterPro" id="IPR001383">
    <property type="entry name" value="Ribosomal_bL28_bact-type"/>
</dbReference>
<dbReference type="InterPro" id="IPR037147">
    <property type="entry name" value="Ribosomal_bL28_sf"/>
</dbReference>
<dbReference type="NCBIfam" id="TIGR00009">
    <property type="entry name" value="L28"/>
    <property type="match status" value="1"/>
</dbReference>
<dbReference type="PANTHER" id="PTHR39080">
    <property type="entry name" value="50S RIBOSOMAL PROTEIN L28"/>
    <property type="match status" value="1"/>
</dbReference>
<dbReference type="PANTHER" id="PTHR39080:SF1">
    <property type="entry name" value="LARGE RIBOSOMAL SUBUNIT PROTEIN BL28A"/>
    <property type="match status" value="1"/>
</dbReference>
<dbReference type="Pfam" id="PF00830">
    <property type="entry name" value="Ribosomal_L28"/>
    <property type="match status" value="1"/>
</dbReference>
<dbReference type="SUPFAM" id="SSF143800">
    <property type="entry name" value="L28p-like"/>
    <property type="match status" value="1"/>
</dbReference>
<keyword id="KW-0687">Ribonucleoprotein</keyword>
<keyword id="KW-0689">Ribosomal protein</keyword>
<comment type="similarity">
    <text evidence="1">Belongs to the bacterial ribosomal protein bL28 family.</text>
</comment>